<dbReference type="EC" id="7.6.2.2" evidence="3"/>
<dbReference type="EC" id="7.6.2.3" evidence="2"/>
<dbReference type="EMBL" id="AJ851786">
    <property type="protein sequence ID" value="CAH65420.1"/>
    <property type="molecule type" value="mRNA"/>
</dbReference>
<dbReference type="RefSeq" id="NP_001012540.1">
    <property type="nucleotide sequence ID" value="NM_001012522.1"/>
</dbReference>
<dbReference type="EMDB" id="EMD-7793"/>
<dbReference type="SMR" id="Q5F364"/>
<dbReference type="FunCoup" id="Q5F364">
    <property type="interactions" value="395"/>
</dbReference>
<dbReference type="STRING" id="9031.ENSGALP00000010735"/>
<dbReference type="PaxDb" id="9031-ENSGALP00000010735"/>
<dbReference type="GeneID" id="395416"/>
<dbReference type="KEGG" id="gga:395416"/>
<dbReference type="CTD" id="4363"/>
<dbReference type="VEuPathDB" id="HostDB:geneid_395416"/>
<dbReference type="eggNOG" id="KOG0054">
    <property type="taxonomic scope" value="Eukaryota"/>
</dbReference>
<dbReference type="InParanoid" id="Q5F364"/>
<dbReference type="OrthoDB" id="6500128at2759"/>
<dbReference type="PhylomeDB" id="Q5F364"/>
<dbReference type="PRO" id="PR:Q5F364"/>
<dbReference type="Proteomes" id="UP000000539">
    <property type="component" value="Unassembled WGS sequence"/>
</dbReference>
<dbReference type="GO" id="GO:0016323">
    <property type="term" value="C:basolateral plasma membrane"/>
    <property type="evidence" value="ECO:0000318"/>
    <property type="project" value="GO_Central"/>
</dbReference>
<dbReference type="GO" id="GO:0008559">
    <property type="term" value="F:ABC-type xenobiotic transporter activity"/>
    <property type="evidence" value="ECO:0000318"/>
    <property type="project" value="GO_Central"/>
</dbReference>
<dbReference type="GO" id="GO:0005524">
    <property type="term" value="F:ATP binding"/>
    <property type="evidence" value="ECO:0007669"/>
    <property type="project" value="UniProtKB-KW"/>
</dbReference>
<dbReference type="GO" id="GO:0016887">
    <property type="term" value="F:ATP hydrolysis activity"/>
    <property type="evidence" value="ECO:0007669"/>
    <property type="project" value="InterPro"/>
</dbReference>
<dbReference type="GO" id="GO:0034634">
    <property type="term" value="F:glutathione transmembrane transporter activity"/>
    <property type="evidence" value="ECO:0000318"/>
    <property type="project" value="GO_Central"/>
</dbReference>
<dbReference type="GO" id="GO:0070729">
    <property type="term" value="P:cyclic nucleotide transport"/>
    <property type="evidence" value="ECO:0000250"/>
    <property type="project" value="UniProtKB"/>
</dbReference>
<dbReference type="GO" id="GO:0034775">
    <property type="term" value="P:glutathione transmembrane transport"/>
    <property type="evidence" value="ECO:0000318"/>
    <property type="project" value="GO_Central"/>
</dbReference>
<dbReference type="GO" id="GO:0006869">
    <property type="term" value="P:lipid transport"/>
    <property type="evidence" value="ECO:0007669"/>
    <property type="project" value="UniProtKB-KW"/>
</dbReference>
<dbReference type="GO" id="GO:0042908">
    <property type="term" value="P:xenobiotic transport"/>
    <property type="evidence" value="ECO:0000318"/>
    <property type="project" value="GO_Central"/>
</dbReference>
<dbReference type="CDD" id="cd18595">
    <property type="entry name" value="ABC_6TM_MRP1_2_3_6_D1_like"/>
    <property type="match status" value="1"/>
</dbReference>
<dbReference type="CDD" id="cd18603">
    <property type="entry name" value="ABC_6TM_MRP1_2_3_6_D2_like"/>
    <property type="match status" value="1"/>
</dbReference>
<dbReference type="CDD" id="cd03250">
    <property type="entry name" value="ABCC_MRP_domain1"/>
    <property type="match status" value="1"/>
</dbReference>
<dbReference type="CDD" id="cd03244">
    <property type="entry name" value="ABCC_MRP_domain2"/>
    <property type="match status" value="1"/>
</dbReference>
<dbReference type="FunFam" id="3.40.50.300:FF:000293">
    <property type="entry name" value="ATP binding cassette subfamily C member 1"/>
    <property type="match status" value="1"/>
</dbReference>
<dbReference type="FunFam" id="1.20.1560.10:FF:000001">
    <property type="entry name" value="ATP-binding cassette subfamily C member 1"/>
    <property type="match status" value="1"/>
</dbReference>
<dbReference type="FunFam" id="1.20.1560.10:FF:000007">
    <property type="entry name" value="ATP-binding cassette subfamily C member 1"/>
    <property type="match status" value="1"/>
</dbReference>
<dbReference type="FunFam" id="3.40.50.300:FF:000074">
    <property type="entry name" value="Multidrug resistance-associated protein 5 isoform 1"/>
    <property type="match status" value="1"/>
</dbReference>
<dbReference type="Gene3D" id="1.20.1560.10">
    <property type="entry name" value="ABC transporter type 1, transmembrane domain"/>
    <property type="match status" value="2"/>
</dbReference>
<dbReference type="Gene3D" id="3.40.50.300">
    <property type="entry name" value="P-loop containing nucleotide triphosphate hydrolases"/>
    <property type="match status" value="2"/>
</dbReference>
<dbReference type="InterPro" id="IPR003593">
    <property type="entry name" value="AAA+_ATPase"/>
</dbReference>
<dbReference type="InterPro" id="IPR011527">
    <property type="entry name" value="ABC1_TM_dom"/>
</dbReference>
<dbReference type="InterPro" id="IPR036640">
    <property type="entry name" value="ABC1_TM_sf"/>
</dbReference>
<dbReference type="InterPro" id="IPR003439">
    <property type="entry name" value="ABC_transporter-like_ATP-bd"/>
</dbReference>
<dbReference type="InterPro" id="IPR017871">
    <property type="entry name" value="ABC_transporter-like_CS"/>
</dbReference>
<dbReference type="InterPro" id="IPR050173">
    <property type="entry name" value="ABC_transporter_C-like"/>
</dbReference>
<dbReference type="InterPro" id="IPR005292">
    <property type="entry name" value="MRP"/>
</dbReference>
<dbReference type="InterPro" id="IPR027417">
    <property type="entry name" value="P-loop_NTPase"/>
</dbReference>
<dbReference type="InterPro" id="IPR056227">
    <property type="entry name" value="TMD0_ABC"/>
</dbReference>
<dbReference type="NCBIfam" id="TIGR00957">
    <property type="entry name" value="MRP_assoc_pro"/>
    <property type="match status" value="1"/>
</dbReference>
<dbReference type="PANTHER" id="PTHR24223">
    <property type="entry name" value="ATP-BINDING CASSETTE SUB-FAMILY C"/>
    <property type="match status" value="1"/>
</dbReference>
<dbReference type="PANTHER" id="PTHR24223:SF241">
    <property type="entry name" value="MULTIDRUG RESISTANCE-ASSOCIATED PROTEIN 1"/>
    <property type="match status" value="1"/>
</dbReference>
<dbReference type="Pfam" id="PF00664">
    <property type="entry name" value="ABC_membrane"/>
    <property type="match status" value="2"/>
</dbReference>
<dbReference type="Pfam" id="PF00005">
    <property type="entry name" value="ABC_tran"/>
    <property type="match status" value="2"/>
</dbReference>
<dbReference type="Pfam" id="PF24357">
    <property type="entry name" value="TMD0_ABC"/>
    <property type="match status" value="1"/>
</dbReference>
<dbReference type="SMART" id="SM00382">
    <property type="entry name" value="AAA"/>
    <property type="match status" value="2"/>
</dbReference>
<dbReference type="SUPFAM" id="SSF90123">
    <property type="entry name" value="ABC transporter transmembrane region"/>
    <property type="match status" value="2"/>
</dbReference>
<dbReference type="SUPFAM" id="SSF52540">
    <property type="entry name" value="P-loop containing nucleoside triphosphate hydrolases"/>
    <property type="match status" value="2"/>
</dbReference>
<dbReference type="PROSITE" id="PS50929">
    <property type="entry name" value="ABC_TM1F"/>
    <property type="match status" value="2"/>
</dbReference>
<dbReference type="PROSITE" id="PS00211">
    <property type="entry name" value="ABC_TRANSPORTER_1"/>
    <property type="match status" value="2"/>
</dbReference>
<dbReference type="PROSITE" id="PS50893">
    <property type="entry name" value="ABC_TRANSPORTER_2"/>
    <property type="match status" value="2"/>
</dbReference>
<protein>
    <recommendedName>
        <fullName evidence="3">Multidrug resistance-associated protein 1</fullName>
        <ecNumber evidence="3">7.6.2.2</ecNumber>
    </recommendedName>
    <alternativeName>
        <fullName>ATP-binding cassette sub-family C member 1</fullName>
    </alternativeName>
    <alternativeName>
        <fullName evidence="2">Glutathione-S-conjugate-translocating ATPase ABCC1</fullName>
        <ecNumber evidence="2">7.6.2.3</ecNumber>
    </alternativeName>
    <alternativeName>
        <fullName>Leukotriene C(4) transporter</fullName>
        <shortName>LTC4 transporter</shortName>
    </alternativeName>
</protein>
<sequence length="1525" mass="170972">MGIESLCSADASEPFWDWNLTWHTENPDFTQCFQNTVLVWVPCIYLWVCFPAYFLYLRSHDRGYIQMSILNKAKTALGLILWIVCWADLFYSFWERSQNIFRAPFFLISPTVLGITMLLATFLIQHERLKGVQSSGVMMIFWLISLLCATVIFRSKIMLALNTDTEVDAFRYVTFCTYFILLLVQLILSCFPEKPPLFSEAVNDPKPCPEFSASFLSRITFWWITGLMIQGHRRPLEAKDLWSLNKEDTSEEIVPGLAKNWAKEWAKTKRQPLNMLYSSKKQQKSSDSNGEVMEEAEALIIKPSQRSSEASLSKVLYKTFGPYFLMSFLFKAAHDLLMFTGPEILKLLINFVNNKSAPNWQGYFYTGLLFVCACLQTLILHQYFHICFVTGMRLKTAIVGVIYRKALVITNSARKTSTVGEIVNLMSVDAQRFMDLATYINMIWSAPLQVILALYLLWRNLGPSVLAGVAVMILLVPINAVMAMKTKTYQVAQMKSKDNRIKLMNEILNGIKVLKLYAWELAFREKVLEIRQKELKVLKKSAYLAAMGTFTWVCAPFLVALSTFAVYVKVNKNNILDAQKAFVSLALFNILRFPLNILPMVISSIVEASVSLKRLRVFLSHEELDPDSIIRGPITNAEGSIVVKNATFSWSKTDPPSLNSINFTVPEGSLIAVVGQVGCGKSSLLSALLGEMDKKEGYVVVKGSIAYVPQQAWIQNATLEDNIIFGREMNESRYKRVIEACALLPDLEILPMGDRTEIGEKGVNLSGGQKQRVSLARAVYCNADTYLFDDPLSAVDAHVGKHIFEKVIGPKGILKNKTRVLVTHAVNYLPQMDTILVMTDGEISEMGSYQELLKQDGAFAEFLRTYANAEQSMESSDASSPSGKEGKPVENGVLVNDATGKLMHRQLSNSSTYSRETGKSQHQSSTAELQKPLAEKNSWKLTEADTAKTGRVKATVYWEYMKAIGLYISFLSVFLFMCNHIASLASNYWLSLWTDDPVVNGTQQYTNVRLGVYGALGISQGIAVFGYSMAVSIGGIFASRHLHLDLLHNVLRSPMSFFERTPSGNLVSRFSKEIDTIDSTIPPIIKMFMGSTFNVIGACIIILLATPIAAVVIPPLGLVYLLVQRFYVATSRQLKRLESVSRSPVYSHFNETLLGVSVIRAFEEQKRFIKQNDMKVDENQKAYYPSIVANRWLAVRLEFVGNCIVLFAALFAVIARNKLSPGLIGLSVSYSLQITAYLNWLVRMTSDLETNIVAVERVKEYAEMEKEAEWSIEETAPASTWPQEGKVEFRGFGLRYREDLDLVLKNINITINGGEKVGIVGRTGAGKSSLTLGLFRINEAAEGEIIIDGINIAKIGLHDLRFKITIIPQDPILFSGSLRMNLDPFDQHSDEDIWRSLELAHLKNFVSSLPDKLNHECSEGGENLSVGQRQLVCLARALLRKSKILVLDEATAAVDLETDNLIQSTIKSQFEECTVLTIAHRLNTIMDYTRVLVLDRGEVVECDSPDNLLQAKGLFYSMAKDSGLA</sequence>
<comment type="function">
    <text evidence="2 3">Mediates export of organic anions and drugs from the cytoplasm. Mediates ATP-dependent transport of glutathione and glutathione conjugates, leukotriene C4, estradiol-17-beta-o-glucuronide and other xenobiotics. Hydrolyzes ATP with low efficiency. Mediates ATP-dependent, GSH-independent cyclic GMP-AMP (cGAMP) export (By similarity). Thus, by limiting intracellular cGAMP concentrations negatively regulates the cGAS-STING pathway (By similarity).</text>
</comment>
<comment type="catalytic activity">
    <reaction evidence="3">
        <text>ATP + H2O + xenobioticSide 1 = ADP + phosphate + xenobioticSide 2.</text>
        <dbReference type="EC" id="7.6.2.2"/>
    </reaction>
</comment>
<comment type="catalytic activity">
    <reaction evidence="2">
        <text>an S-substituted glutathione(in) + ATP + H2O = an S-substituted glutathione(out) + ADP + phosphate + H(+)</text>
        <dbReference type="Rhea" id="RHEA:19121"/>
        <dbReference type="ChEBI" id="CHEBI:15377"/>
        <dbReference type="ChEBI" id="CHEBI:15378"/>
        <dbReference type="ChEBI" id="CHEBI:30616"/>
        <dbReference type="ChEBI" id="CHEBI:43474"/>
        <dbReference type="ChEBI" id="CHEBI:90779"/>
        <dbReference type="ChEBI" id="CHEBI:456216"/>
        <dbReference type="EC" id="7.6.2.3"/>
    </reaction>
</comment>
<comment type="catalytic activity">
    <reaction evidence="3">
        <text>sphing-4-enine 1-phosphate(in) + ATP + H2O = sphing-4-enine 1-phosphate(out) + ADP + phosphate + H(+)</text>
        <dbReference type="Rhea" id="RHEA:38951"/>
        <dbReference type="ChEBI" id="CHEBI:15377"/>
        <dbReference type="ChEBI" id="CHEBI:15378"/>
        <dbReference type="ChEBI" id="CHEBI:30616"/>
        <dbReference type="ChEBI" id="CHEBI:43474"/>
        <dbReference type="ChEBI" id="CHEBI:60119"/>
        <dbReference type="ChEBI" id="CHEBI:456216"/>
    </reaction>
    <physiologicalReaction direction="left-to-right" evidence="3">
        <dbReference type="Rhea" id="RHEA:38952"/>
    </physiologicalReaction>
</comment>
<comment type="catalytic activity">
    <reaction evidence="3">
        <text>leukotriene C4(in) + ATP + H2O = leukotriene C4(out) + ADP + phosphate + H(+)</text>
        <dbReference type="Rhea" id="RHEA:38963"/>
        <dbReference type="ChEBI" id="CHEBI:15377"/>
        <dbReference type="ChEBI" id="CHEBI:15378"/>
        <dbReference type="ChEBI" id="CHEBI:30616"/>
        <dbReference type="ChEBI" id="CHEBI:43474"/>
        <dbReference type="ChEBI" id="CHEBI:57973"/>
        <dbReference type="ChEBI" id="CHEBI:456216"/>
    </reaction>
    <physiologicalReaction direction="left-to-right" evidence="3">
        <dbReference type="Rhea" id="RHEA:38964"/>
    </physiologicalReaction>
</comment>
<comment type="catalytic activity">
    <reaction evidence="3">
        <text>17beta-estradiol 17-O-(beta-D-glucuronate)(in) + ATP + H2O = 17beta-estradiol 17-O-(beta-D-glucuronate)(out) + ADP + phosphate + H(+)</text>
        <dbReference type="Rhea" id="RHEA:60128"/>
        <dbReference type="ChEBI" id="CHEBI:15377"/>
        <dbReference type="ChEBI" id="CHEBI:15378"/>
        <dbReference type="ChEBI" id="CHEBI:30616"/>
        <dbReference type="ChEBI" id="CHEBI:43474"/>
        <dbReference type="ChEBI" id="CHEBI:82961"/>
        <dbReference type="ChEBI" id="CHEBI:456216"/>
    </reaction>
    <physiologicalReaction direction="left-to-right" evidence="3">
        <dbReference type="Rhea" id="RHEA:60129"/>
    </physiologicalReaction>
</comment>
<comment type="catalytic activity">
    <reaction evidence="3">
        <text>2',3'-cGAMP(in) + ATP + H2O = 2',3'-cGAMP(out) + ADP + phosphate + H(+)</text>
        <dbReference type="Rhea" id="RHEA:74887"/>
        <dbReference type="ChEBI" id="CHEBI:15377"/>
        <dbReference type="ChEBI" id="CHEBI:15378"/>
        <dbReference type="ChEBI" id="CHEBI:30616"/>
        <dbReference type="ChEBI" id="CHEBI:43474"/>
        <dbReference type="ChEBI" id="CHEBI:143093"/>
        <dbReference type="ChEBI" id="CHEBI:456216"/>
    </reaction>
</comment>
<comment type="subcellular location">
    <subcellularLocation>
        <location evidence="3">Cell membrane</location>
        <topology evidence="3 5">Multi-pass membrane protein</topology>
    </subcellularLocation>
</comment>
<comment type="similarity">
    <text evidence="7">Belongs to the ABC transporter superfamily. ABCC family. Conjugate transporter (TC 3.A.1.208) subfamily.</text>
</comment>
<organism>
    <name type="scientific">Gallus gallus</name>
    <name type="common">Chicken</name>
    <dbReference type="NCBI Taxonomy" id="9031"/>
    <lineage>
        <taxon>Eukaryota</taxon>
        <taxon>Metazoa</taxon>
        <taxon>Chordata</taxon>
        <taxon>Craniata</taxon>
        <taxon>Vertebrata</taxon>
        <taxon>Euteleostomi</taxon>
        <taxon>Archelosauria</taxon>
        <taxon>Archosauria</taxon>
        <taxon>Dinosauria</taxon>
        <taxon>Saurischia</taxon>
        <taxon>Theropoda</taxon>
        <taxon>Coelurosauria</taxon>
        <taxon>Aves</taxon>
        <taxon>Neognathae</taxon>
        <taxon>Galloanserae</taxon>
        <taxon>Galliformes</taxon>
        <taxon>Phasianidae</taxon>
        <taxon>Phasianinae</taxon>
        <taxon>Gallus</taxon>
    </lineage>
</organism>
<proteinExistence type="evidence at transcript level"/>
<feature type="chain" id="PRO_0000093355" description="Multidrug resistance-associated protein 1">
    <location>
        <begin position="1"/>
        <end position="1525"/>
    </location>
</feature>
<feature type="topological domain" description="Extracellular" evidence="1">
    <location>
        <begin position="1"/>
        <end position="33"/>
    </location>
</feature>
<feature type="transmembrane region" description="Helical; Name=1" evidence="5">
    <location>
        <begin position="34"/>
        <end position="54"/>
    </location>
</feature>
<feature type="topological domain" description="Cytoplasmic" evidence="1">
    <location>
        <begin position="55"/>
        <end position="74"/>
    </location>
</feature>
<feature type="transmembrane region" description="Helical; Name=2" evidence="5">
    <location>
        <begin position="75"/>
        <end position="95"/>
    </location>
</feature>
<feature type="topological domain" description="Extracellular" evidence="1">
    <location>
        <begin position="96"/>
        <end position="100"/>
    </location>
</feature>
<feature type="transmembrane region" description="Helical; Name=3" evidence="5">
    <location>
        <begin position="101"/>
        <end position="121"/>
    </location>
</feature>
<feature type="topological domain" description="Cytoplasmic" evidence="1">
    <location>
        <begin position="122"/>
        <end position="133"/>
    </location>
</feature>
<feature type="transmembrane region" description="Helical; Name=4" evidence="5">
    <location>
        <begin position="134"/>
        <end position="154"/>
    </location>
</feature>
<feature type="topological domain" description="Extracellular" evidence="1">
    <location>
        <begin position="155"/>
        <end position="172"/>
    </location>
</feature>
<feature type="transmembrane region" description="Helical; Name=5" evidence="5">
    <location>
        <begin position="173"/>
        <end position="193"/>
    </location>
</feature>
<feature type="topological domain" description="Cytoplasmic" evidence="1">
    <location>
        <begin position="194"/>
        <end position="315"/>
    </location>
</feature>
<feature type="transmembrane region" description="Helical; Name=6" evidence="5">
    <location>
        <begin position="316"/>
        <end position="336"/>
    </location>
</feature>
<feature type="topological domain" description="Extracellular" evidence="1">
    <location>
        <begin position="337"/>
        <end position="362"/>
    </location>
</feature>
<feature type="transmembrane region" description="Helical; Name=7" evidence="5">
    <location>
        <begin position="363"/>
        <end position="383"/>
    </location>
</feature>
<feature type="topological domain" description="Cytoplasmic" evidence="1">
    <location>
        <begin position="384"/>
        <end position="439"/>
    </location>
</feature>
<feature type="transmembrane region" description="Helical; Name=8" evidence="5">
    <location>
        <begin position="440"/>
        <end position="460"/>
    </location>
</feature>
<feature type="topological domain" description="Extracellular" evidence="1">
    <location>
        <begin position="461"/>
        <end position="463"/>
    </location>
</feature>
<feature type="transmembrane region" description="Helical; Name=9" evidence="5">
    <location>
        <begin position="464"/>
        <end position="484"/>
    </location>
</feature>
<feature type="topological domain" description="Cytoplasmic" evidence="1">
    <location>
        <begin position="485"/>
        <end position="546"/>
    </location>
</feature>
<feature type="transmembrane region" description="Helical; Name=10" evidence="5">
    <location>
        <begin position="547"/>
        <end position="567"/>
    </location>
</feature>
<feature type="topological domain" description="Extracellular" evidence="1">
    <location>
        <begin position="568"/>
        <end position="589"/>
    </location>
</feature>
<feature type="transmembrane region" description="Helical; Name=11" evidence="5">
    <location>
        <begin position="590"/>
        <end position="610"/>
    </location>
</feature>
<feature type="topological domain" description="Cytoplasmic" evidence="1">
    <location>
        <begin position="611"/>
        <end position="961"/>
    </location>
</feature>
<feature type="transmembrane region" description="Helical; Name=12" evidence="5">
    <location>
        <begin position="962"/>
        <end position="982"/>
    </location>
</feature>
<feature type="topological domain" description="Extracellular" evidence="1">
    <location>
        <begin position="983"/>
        <end position="1019"/>
    </location>
</feature>
<feature type="transmembrane region" description="Helical; Name=13" evidence="5">
    <location>
        <begin position="1020"/>
        <end position="1040"/>
    </location>
</feature>
<feature type="topological domain" description="Cytoplasmic" evidence="1">
    <location>
        <begin position="1041"/>
        <end position="1083"/>
    </location>
</feature>
<feature type="transmembrane region" description="Helical; Name=14" evidence="5">
    <location>
        <begin position="1084"/>
        <end position="1104"/>
    </location>
</feature>
<feature type="topological domain" description="Extracellular" evidence="1">
    <location>
        <position position="1105"/>
    </location>
</feature>
<feature type="transmembrane region" description="Helical; Name=15" evidence="5">
    <location>
        <begin position="1106"/>
        <end position="1126"/>
    </location>
</feature>
<feature type="topological domain" description="Cytoplasmic" evidence="1">
    <location>
        <begin position="1127"/>
        <end position="1197"/>
    </location>
</feature>
<feature type="transmembrane region" description="Helical; Name=16" evidence="5">
    <location>
        <begin position="1198"/>
        <end position="1218"/>
    </location>
</feature>
<feature type="topological domain" description="Extracellular" evidence="1">
    <location>
        <begin position="1219"/>
        <end position="1220"/>
    </location>
</feature>
<feature type="transmembrane region" description="Helical; Name=17" evidence="5">
    <location>
        <begin position="1221"/>
        <end position="1241"/>
    </location>
</feature>
<feature type="topological domain" description="Cytoplasmic" evidence="1">
    <location>
        <begin position="1242"/>
        <end position="1525"/>
    </location>
</feature>
<feature type="domain" description="ABC transmembrane type-1 1" evidence="5">
    <location>
        <begin position="324"/>
        <end position="607"/>
    </location>
</feature>
<feature type="domain" description="ABC transporter 1" evidence="4">
    <location>
        <begin position="641"/>
        <end position="865"/>
    </location>
</feature>
<feature type="domain" description="ABC transmembrane type-1 2" evidence="5">
    <location>
        <begin position="969"/>
        <end position="1250"/>
    </location>
</feature>
<feature type="domain" description="ABC transporter 2" evidence="4">
    <location>
        <begin position="1289"/>
        <end position="1521"/>
    </location>
</feature>
<feature type="region of interest" description="Disordered" evidence="6">
    <location>
        <begin position="871"/>
        <end position="891"/>
    </location>
</feature>
<feature type="region of interest" description="Disordered" evidence="6">
    <location>
        <begin position="908"/>
        <end position="930"/>
    </location>
</feature>
<feature type="compositionally biased region" description="Polar residues" evidence="6">
    <location>
        <begin position="871"/>
        <end position="882"/>
    </location>
</feature>
<feature type="compositionally biased region" description="Polar residues" evidence="6">
    <location>
        <begin position="908"/>
        <end position="928"/>
    </location>
</feature>
<feature type="binding site" evidence="4">
    <location>
        <begin position="675"/>
        <end position="682"/>
    </location>
    <ligand>
        <name>ATP</name>
        <dbReference type="ChEBI" id="CHEBI:30616"/>
        <label>1</label>
    </ligand>
</feature>
<feature type="binding site" evidence="4">
    <location>
        <begin position="1321"/>
        <end position="1328"/>
    </location>
    <ligand>
        <name>ATP</name>
        <dbReference type="ChEBI" id="CHEBI:30616"/>
        <label>2</label>
    </ligand>
</feature>
<gene>
    <name evidence="2" type="primary">ABCC1</name>
    <name type="synonym">MRP1</name>
    <name type="ORF">RCJMB04_32d20</name>
</gene>
<keyword id="KW-0067">ATP-binding</keyword>
<keyword id="KW-1003">Cell membrane</keyword>
<keyword id="KW-0378">Hydrolase</keyword>
<keyword id="KW-0445">Lipid transport</keyword>
<keyword id="KW-0472">Membrane</keyword>
<keyword id="KW-0547">Nucleotide-binding</keyword>
<keyword id="KW-1185">Reference proteome</keyword>
<keyword id="KW-0677">Repeat</keyword>
<keyword id="KW-1278">Translocase</keyword>
<keyword id="KW-0812">Transmembrane</keyword>
<keyword id="KW-1133">Transmembrane helix</keyword>
<keyword id="KW-0813">Transport</keyword>
<accession>Q5F364</accession>
<reference key="1">
    <citation type="journal article" date="2005" name="Genome Biol.">
        <title>Full-length cDNAs from chicken bursal lymphocytes to facilitate gene function analysis.</title>
        <authorList>
            <person name="Caldwell R.B."/>
            <person name="Kierzek A.M."/>
            <person name="Arakawa H."/>
            <person name="Bezzubov Y."/>
            <person name="Zaim J."/>
            <person name="Fiedler P."/>
            <person name="Kutter S."/>
            <person name="Blagodatski A."/>
            <person name="Kostovska D."/>
            <person name="Koter M."/>
            <person name="Plachy J."/>
            <person name="Carninci P."/>
            <person name="Hayashizaki Y."/>
            <person name="Buerstedde J.-M."/>
        </authorList>
    </citation>
    <scope>NUCLEOTIDE SEQUENCE [LARGE SCALE MRNA]</scope>
    <source>
        <strain>CB</strain>
        <tissue>Bursa of Fabricius</tissue>
    </source>
</reference>
<name>MRP1_CHICK</name>
<evidence type="ECO:0000250" key="1"/>
<evidence type="ECO:0000250" key="2">
    <source>
        <dbReference type="UniProtKB" id="O35379"/>
    </source>
</evidence>
<evidence type="ECO:0000250" key="3">
    <source>
        <dbReference type="UniProtKB" id="P33527"/>
    </source>
</evidence>
<evidence type="ECO:0000255" key="4">
    <source>
        <dbReference type="PROSITE-ProRule" id="PRU00434"/>
    </source>
</evidence>
<evidence type="ECO:0000255" key="5">
    <source>
        <dbReference type="PROSITE-ProRule" id="PRU00441"/>
    </source>
</evidence>
<evidence type="ECO:0000256" key="6">
    <source>
        <dbReference type="SAM" id="MobiDB-lite"/>
    </source>
</evidence>
<evidence type="ECO:0000305" key="7"/>